<dbReference type="EC" id="1.2.1.41" evidence="1"/>
<dbReference type="EMBL" id="CP000127">
    <property type="protein sequence ID" value="ABA59115.1"/>
    <property type="molecule type" value="Genomic_DNA"/>
</dbReference>
<dbReference type="RefSeq" id="WP_002812548.1">
    <property type="nucleotide sequence ID" value="NC_007484.1"/>
</dbReference>
<dbReference type="SMR" id="Q3J7T1"/>
<dbReference type="FunCoup" id="Q3J7T1">
    <property type="interactions" value="444"/>
</dbReference>
<dbReference type="STRING" id="323261.Noc_2662"/>
<dbReference type="KEGG" id="noc:Noc_2662"/>
<dbReference type="eggNOG" id="COG0014">
    <property type="taxonomic scope" value="Bacteria"/>
</dbReference>
<dbReference type="HOGENOM" id="CLU_030231_0_0_6"/>
<dbReference type="InParanoid" id="Q3J7T1"/>
<dbReference type="UniPathway" id="UPA00098">
    <property type="reaction ID" value="UER00360"/>
</dbReference>
<dbReference type="Proteomes" id="UP000006838">
    <property type="component" value="Chromosome"/>
</dbReference>
<dbReference type="GO" id="GO:0005737">
    <property type="term" value="C:cytoplasm"/>
    <property type="evidence" value="ECO:0007669"/>
    <property type="project" value="UniProtKB-SubCell"/>
</dbReference>
<dbReference type="GO" id="GO:0004350">
    <property type="term" value="F:glutamate-5-semialdehyde dehydrogenase activity"/>
    <property type="evidence" value="ECO:0007669"/>
    <property type="project" value="UniProtKB-UniRule"/>
</dbReference>
<dbReference type="GO" id="GO:0050661">
    <property type="term" value="F:NADP binding"/>
    <property type="evidence" value="ECO:0007669"/>
    <property type="project" value="InterPro"/>
</dbReference>
<dbReference type="GO" id="GO:0055129">
    <property type="term" value="P:L-proline biosynthetic process"/>
    <property type="evidence" value="ECO:0007669"/>
    <property type="project" value="UniProtKB-UniRule"/>
</dbReference>
<dbReference type="CDD" id="cd07079">
    <property type="entry name" value="ALDH_F18-19_ProA-GPR"/>
    <property type="match status" value="1"/>
</dbReference>
<dbReference type="FunFam" id="3.40.309.10:FF:000006">
    <property type="entry name" value="Gamma-glutamyl phosphate reductase"/>
    <property type="match status" value="1"/>
</dbReference>
<dbReference type="Gene3D" id="3.40.605.10">
    <property type="entry name" value="Aldehyde Dehydrogenase, Chain A, domain 1"/>
    <property type="match status" value="1"/>
</dbReference>
<dbReference type="Gene3D" id="3.40.309.10">
    <property type="entry name" value="Aldehyde Dehydrogenase, Chain A, domain 2"/>
    <property type="match status" value="1"/>
</dbReference>
<dbReference type="HAMAP" id="MF_00412">
    <property type="entry name" value="ProA"/>
    <property type="match status" value="1"/>
</dbReference>
<dbReference type="InterPro" id="IPR016161">
    <property type="entry name" value="Ald_DH/histidinol_DH"/>
</dbReference>
<dbReference type="InterPro" id="IPR016163">
    <property type="entry name" value="Ald_DH_C"/>
</dbReference>
<dbReference type="InterPro" id="IPR016162">
    <property type="entry name" value="Ald_DH_N"/>
</dbReference>
<dbReference type="InterPro" id="IPR015590">
    <property type="entry name" value="Aldehyde_DH_dom"/>
</dbReference>
<dbReference type="InterPro" id="IPR020593">
    <property type="entry name" value="G-glutamylP_reductase_CS"/>
</dbReference>
<dbReference type="InterPro" id="IPR012134">
    <property type="entry name" value="Glu-5-SA_DH"/>
</dbReference>
<dbReference type="InterPro" id="IPR000965">
    <property type="entry name" value="GPR_dom"/>
</dbReference>
<dbReference type="NCBIfam" id="NF001221">
    <property type="entry name" value="PRK00197.1"/>
    <property type="match status" value="1"/>
</dbReference>
<dbReference type="NCBIfam" id="TIGR00407">
    <property type="entry name" value="proA"/>
    <property type="match status" value="1"/>
</dbReference>
<dbReference type="PANTHER" id="PTHR11063:SF8">
    <property type="entry name" value="DELTA-1-PYRROLINE-5-CARBOXYLATE SYNTHASE"/>
    <property type="match status" value="1"/>
</dbReference>
<dbReference type="PANTHER" id="PTHR11063">
    <property type="entry name" value="GLUTAMATE SEMIALDEHYDE DEHYDROGENASE"/>
    <property type="match status" value="1"/>
</dbReference>
<dbReference type="Pfam" id="PF00171">
    <property type="entry name" value="Aldedh"/>
    <property type="match status" value="1"/>
</dbReference>
<dbReference type="PIRSF" id="PIRSF000151">
    <property type="entry name" value="GPR"/>
    <property type="match status" value="1"/>
</dbReference>
<dbReference type="SUPFAM" id="SSF53720">
    <property type="entry name" value="ALDH-like"/>
    <property type="match status" value="1"/>
</dbReference>
<dbReference type="PROSITE" id="PS01223">
    <property type="entry name" value="PROA"/>
    <property type="match status" value="1"/>
</dbReference>
<comment type="function">
    <text evidence="1">Catalyzes the NADPH-dependent reduction of L-glutamate 5-phosphate into L-glutamate 5-semialdehyde and phosphate. The product spontaneously undergoes cyclization to form 1-pyrroline-5-carboxylate.</text>
</comment>
<comment type="catalytic activity">
    <reaction evidence="1">
        <text>L-glutamate 5-semialdehyde + phosphate + NADP(+) = L-glutamyl 5-phosphate + NADPH + H(+)</text>
        <dbReference type="Rhea" id="RHEA:19541"/>
        <dbReference type="ChEBI" id="CHEBI:15378"/>
        <dbReference type="ChEBI" id="CHEBI:43474"/>
        <dbReference type="ChEBI" id="CHEBI:57783"/>
        <dbReference type="ChEBI" id="CHEBI:58066"/>
        <dbReference type="ChEBI" id="CHEBI:58274"/>
        <dbReference type="ChEBI" id="CHEBI:58349"/>
        <dbReference type="EC" id="1.2.1.41"/>
    </reaction>
</comment>
<comment type="pathway">
    <text evidence="1">Amino-acid biosynthesis; L-proline biosynthesis; L-glutamate 5-semialdehyde from L-glutamate: step 2/2.</text>
</comment>
<comment type="subcellular location">
    <subcellularLocation>
        <location evidence="1">Cytoplasm</location>
    </subcellularLocation>
</comment>
<comment type="similarity">
    <text evidence="1">Belongs to the gamma-glutamyl phosphate reductase family.</text>
</comment>
<sequence>MDIKDYMQNLGCRARKVSRVLARAGAEEKNQALEMAASFIEKESQALVEANHKDLAAGRSKGLDEALLDRLTLTEARIAVMAEGLRQIASLPDPVGAISELSYRPSGIQVGRMRVPLGVIGIIYESRPNVTADAAGLCLKSGNAVILRGGSEAFHSNQAIACCIHQGLEQAGLPQEAVQVVETTDRLAVGALITQEEHVDVIIPRGGRSLIERISQEAKIPVIKHLDGICHVYIDDRADLDKAVAIAVNAKCQRYGVCNAMETLLVAREIAAEILPMMGEHYCSAGVELRGCPETQGLLPHIEPATEEDWYTEYLAPLLAIRIVAGLDEAIEHITHYGSHHTETIVTEDFTRARRFLTEVDSSSVMVNASTRFADGFEYGLGAEIGISTDKLHARGPVGLEGLTSQKWIVLGNGHIRE</sequence>
<proteinExistence type="inferred from homology"/>
<gene>
    <name evidence="1" type="primary">proA</name>
    <name type="ordered locus">Noc_2662</name>
</gene>
<reference key="1">
    <citation type="journal article" date="2006" name="Appl. Environ. Microbiol.">
        <title>Complete genome sequence of the marine, chemolithoautotrophic, ammonia-oxidizing bacterium Nitrosococcus oceani ATCC 19707.</title>
        <authorList>
            <person name="Klotz M.G."/>
            <person name="Arp D.J."/>
            <person name="Chain P.S.G."/>
            <person name="El-Sheikh A.F."/>
            <person name="Hauser L.J."/>
            <person name="Hommes N.G."/>
            <person name="Larimer F.W."/>
            <person name="Malfatti S.A."/>
            <person name="Norton J.M."/>
            <person name="Poret-Peterson A.T."/>
            <person name="Vergez L.M."/>
            <person name="Ward B.B."/>
        </authorList>
    </citation>
    <scope>NUCLEOTIDE SEQUENCE [LARGE SCALE GENOMIC DNA]</scope>
    <source>
        <strain>ATCC 19707 / BCRC 17464 / JCM 30415 / NCIMB 11848 / C-107</strain>
    </source>
</reference>
<feature type="chain" id="PRO_0000230007" description="Gamma-glutamyl phosphate reductase">
    <location>
        <begin position="1"/>
        <end position="418"/>
    </location>
</feature>
<keyword id="KW-0028">Amino-acid biosynthesis</keyword>
<keyword id="KW-0963">Cytoplasm</keyword>
<keyword id="KW-0521">NADP</keyword>
<keyword id="KW-0560">Oxidoreductase</keyword>
<keyword id="KW-0641">Proline biosynthesis</keyword>
<keyword id="KW-1185">Reference proteome</keyword>
<organism>
    <name type="scientific">Nitrosococcus oceani (strain ATCC 19707 / BCRC 17464 / JCM 30415 / NCIMB 11848 / C-107)</name>
    <dbReference type="NCBI Taxonomy" id="323261"/>
    <lineage>
        <taxon>Bacteria</taxon>
        <taxon>Pseudomonadati</taxon>
        <taxon>Pseudomonadota</taxon>
        <taxon>Gammaproteobacteria</taxon>
        <taxon>Chromatiales</taxon>
        <taxon>Chromatiaceae</taxon>
        <taxon>Nitrosococcus</taxon>
    </lineage>
</organism>
<name>PROA_NITOC</name>
<accession>Q3J7T1</accession>
<evidence type="ECO:0000255" key="1">
    <source>
        <dbReference type="HAMAP-Rule" id="MF_00412"/>
    </source>
</evidence>
<protein>
    <recommendedName>
        <fullName evidence="1">Gamma-glutamyl phosphate reductase</fullName>
        <shortName evidence="1">GPR</shortName>
        <ecNumber evidence="1">1.2.1.41</ecNumber>
    </recommendedName>
    <alternativeName>
        <fullName evidence="1">Glutamate-5-semialdehyde dehydrogenase</fullName>
    </alternativeName>
    <alternativeName>
        <fullName evidence="1">Glutamyl-gamma-semialdehyde dehydrogenase</fullName>
        <shortName evidence="1">GSA dehydrogenase</shortName>
    </alternativeName>
</protein>